<sequence length="513" mass="58633">MSLSTKREHSGDVTDSSFKRQQRSNKPSSEYTCLGHLVNLIPGKEQKVEITNRNVTTIGRSRSCDVILSEPDISTFHAEFHLLQMDVDNFQRNLINVIDKSRNGTFINGNRLVKKDYILKNGDRIVFGKSCSFLFKYASSSSTDIENDDEKVSSESRSYKNDDEVFKKPQISATSSQNATTSAAIRKLNKTRPVSFFDKYLLGKELGAGHYALVKEAKNKKTGQQVAVKIFHAQQNDDQKKNKQFREETNILMRVQHPNIVNLLDSFVEPISKSQIQKYLVLEKIDDGELFERIVRKTCLRQDESKALFKQLLTGLKYLHEQNIIHRDIKPENILLNITRRENPSQVQLGPWDEDEIDIQVKIADFGLAKFTGEMQFTNTLCGTPSYVAPEVLTKKGYTSKVDLWSAGVILYVCLCGFPPFSDQLGPPSLKEQILQAKYAFYSPYWDKIDDSVLHLISNLLVLNPDERYNIDEALNHPWFNDIQQQSSVSLELQRLQITDNKIPKTYSELSCL</sequence>
<proteinExistence type="evidence at protein level"/>
<comment type="function">
    <text evidence="4 5">Transducer of the DNA damage signal. Phosphorylates SML1 on serine residues. Cooperates with the PAN deadenylation complex in the regulation of RAD5 mRNA levels and cell survival in response to replicational stress.</text>
</comment>
<comment type="catalytic activity">
    <reaction>
        <text>L-seryl-[protein] + ATP = O-phospho-L-seryl-[protein] + ADP + H(+)</text>
        <dbReference type="Rhea" id="RHEA:17989"/>
        <dbReference type="Rhea" id="RHEA-COMP:9863"/>
        <dbReference type="Rhea" id="RHEA-COMP:11604"/>
        <dbReference type="ChEBI" id="CHEBI:15378"/>
        <dbReference type="ChEBI" id="CHEBI:29999"/>
        <dbReference type="ChEBI" id="CHEBI:30616"/>
        <dbReference type="ChEBI" id="CHEBI:83421"/>
        <dbReference type="ChEBI" id="CHEBI:456216"/>
        <dbReference type="EC" id="2.7.11.1"/>
    </reaction>
</comment>
<comment type="catalytic activity">
    <reaction>
        <text>L-threonyl-[protein] + ATP = O-phospho-L-threonyl-[protein] + ADP + H(+)</text>
        <dbReference type="Rhea" id="RHEA:46608"/>
        <dbReference type="Rhea" id="RHEA-COMP:11060"/>
        <dbReference type="Rhea" id="RHEA-COMP:11605"/>
        <dbReference type="ChEBI" id="CHEBI:15378"/>
        <dbReference type="ChEBI" id="CHEBI:30013"/>
        <dbReference type="ChEBI" id="CHEBI:30616"/>
        <dbReference type="ChEBI" id="CHEBI:61977"/>
        <dbReference type="ChEBI" id="CHEBI:456216"/>
        <dbReference type="EC" id="2.7.11.1"/>
    </reaction>
</comment>
<comment type="subunit">
    <text evidence="5">Interacts with the PAB-dependent poly(A)-nuclease (PAN) complex regulatory subunit PAN3 via its forkhead-associated (FHA) domain.</text>
</comment>
<comment type="interaction">
    <interactant intactId="EBI-6194">
        <id>P39009</id>
    </interactant>
    <interactant intactId="EBI-37072">
        <id>Q12449</id>
        <label>AHA1</label>
    </interactant>
    <organismsDiffer>false</organismsDiffer>
    <experiments>2</experiments>
</comment>
<comment type="interaction">
    <interactant intactId="EBI-6194">
        <id>P39009</id>
    </interactant>
    <interactant intactId="EBI-10873">
        <id>P26188</id>
        <label>MGT1</label>
    </interactant>
    <organismsDiffer>false</organismsDiffer>
    <experiments>2</experiments>
</comment>
<comment type="interaction">
    <interactant intactId="EBI-6194">
        <id>P39009</id>
    </interactant>
    <interactant intactId="EBI-14675">
        <id>P32641</id>
        <label>RAD24</label>
    </interactant>
    <organismsDiffer>false</organismsDiffer>
    <experiments>2</experiments>
</comment>
<comment type="interaction">
    <interactant intactId="EBI-6194">
        <id>P39009</id>
    </interactant>
    <interactant intactId="EBI-29718">
        <id>Q12021</id>
        <label>RAD28</label>
    </interactant>
    <organismsDiffer>false</organismsDiffer>
    <experiments>2</experiments>
</comment>
<comment type="interaction">
    <interactant intactId="EBI-6194">
        <id>P39009</id>
    </interactant>
    <interactant intactId="EBI-14700">
        <id>P12753</id>
        <label>RAD50</label>
    </interactant>
    <organismsDiffer>false</organismsDiffer>
    <experiments>2</experiments>
</comment>
<comment type="interaction">
    <interactant intactId="EBI-6194">
        <id>P39009</id>
    </interactant>
    <interactant intactId="EBI-17843">
        <id>P22216</id>
        <label>RAD53</label>
    </interactant>
    <organismsDiffer>false</organismsDiffer>
    <experiments>3</experiments>
</comment>
<comment type="interaction">
    <interactant intactId="EBI-6194">
        <id>P39009</id>
    </interactant>
    <interactant intactId="EBI-18110">
        <id>P12954</id>
        <label>SRS2</label>
    </interactant>
    <organismsDiffer>false</organismsDiffer>
    <experiments>3</experiments>
</comment>
<comment type="interaction">
    <interactant intactId="EBI-6194">
        <id>P39009</id>
    </interactant>
    <interactant intactId="EBI-27486">
        <id>Q05016</id>
        <label>YMR226C</label>
    </interactant>
    <organismsDiffer>false</organismsDiffer>
    <experiments>2</experiments>
</comment>
<comment type="subcellular location">
    <subcellularLocation>
        <location>Nucleus</location>
    </subcellularLocation>
</comment>
<comment type="PTM">
    <text>Autophosphorylation increases in response to DNA damage.</text>
</comment>
<comment type="miscellaneous">
    <text evidence="6">Present with 3480 molecules/cell in log phase SD medium.</text>
</comment>
<comment type="similarity">
    <text evidence="8">Belongs to the protein kinase superfamily. CAMK Ser/Thr protein kinase family. CHEK2 subfamily.</text>
</comment>
<reference key="1">
    <citation type="journal article" date="1993" name="Cell">
        <title>DUN1 encodes a protein kinase that controls the DNA damage response in yeast.</title>
        <authorList>
            <person name="Zhou Z."/>
            <person name="Elledge S.J."/>
        </authorList>
    </citation>
    <scope>NUCLEOTIDE SEQUENCE</scope>
    <scope>MUTAGENESIS OF LYS-229 AND ASP-328</scope>
</reference>
<reference key="2">
    <citation type="journal article" date="1996" name="Yeast">
        <title>The sequence of a 20.3 kb DNA fragment from the left arm of Saccharomyces cerevisiae chromosome IV contains the KIN28, MSS2, PHO2, POL3 and DUN1 genes, and six new open reading frames.</title>
        <authorList>
            <person name="Saiz J.E."/>
            <person name="Buitrago M.J."/>
            <person name="Garcia R."/>
            <person name="Revuelta J.L."/>
            <person name="del Rey F."/>
        </authorList>
    </citation>
    <scope>NUCLEOTIDE SEQUENCE [GENOMIC DNA]</scope>
    <source>
        <strain>ATCC 96604 / S288c / FY1679</strain>
    </source>
</reference>
<reference key="3">
    <citation type="journal article" date="1996" name="Yeast">
        <title>The sequence of a 16,691 bp segment of Saccharomyces cerevisiae chromosome IV identifies the DUN1, PMT1, PMT5, SRP14 and DPR1 genes, and five new open reading frames.</title>
        <authorList>
            <person name="Boskovic J."/>
            <person name="Soler-Mira A."/>
            <person name="Garcia-Cantalejo J.M."/>
            <person name="Ballesta J.P.G."/>
            <person name="Jimenez A."/>
            <person name="Remacha M.A."/>
        </authorList>
    </citation>
    <scope>NUCLEOTIDE SEQUENCE [GENOMIC DNA]</scope>
    <source>
        <strain>ATCC 96604 / S288c / FY1679</strain>
    </source>
</reference>
<reference key="4">
    <citation type="journal article" date="1997" name="Nature">
        <title>The nucleotide sequence of Saccharomyces cerevisiae chromosome IV.</title>
        <authorList>
            <person name="Jacq C."/>
            <person name="Alt-Moerbe J."/>
            <person name="Andre B."/>
            <person name="Arnold W."/>
            <person name="Bahr A."/>
            <person name="Ballesta J.P.G."/>
            <person name="Bargues M."/>
            <person name="Baron L."/>
            <person name="Becker A."/>
            <person name="Biteau N."/>
            <person name="Bloecker H."/>
            <person name="Blugeon C."/>
            <person name="Boskovic J."/>
            <person name="Brandt P."/>
            <person name="Brueckner M."/>
            <person name="Buitrago M.J."/>
            <person name="Coster F."/>
            <person name="Delaveau T."/>
            <person name="del Rey F."/>
            <person name="Dujon B."/>
            <person name="Eide L.G."/>
            <person name="Garcia-Cantalejo J.M."/>
            <person name="Goffeau A."/>
            <person name="Gomez-Peris A."/>
            <person name="Granotier C."/>
            <person name="Hanemann V."/>
            <person name="Hankeln T."/>
            <person name="Hoheisel J.D."/>
            <person name="Jaeger W."/>
            <person name="Jimenez A."/>
            <person name="Jonniaux J.-L."/>
            <person name="Kraemer C."/>
            <person name="Kuester H."/>
            <person name="Laamanen P."/>
            <person name="Legros Y."/>
            <person name="Louis E.J."/>
            <person name="Moeller-Rieker S."/>
            <person name="Monnet A."/>
            <person name="Moro M."/>
            <person name="Mueller-Auer S."/>
            <person name="Nussbaumer B."/>
            <person name="Paricio N."/>
            <person name="Paulin L."/>
            <person name="Perea J."/>
            <person name="Perez-Alonso M."/>
            <person name="Perez-Ortin J.E."/>
            <person name="Pohl T.M."/>
            <person name="Prydz H."/>
            <person name="Purnelle B."/>
            <person name="Rasmussen S.W."/>
            <person name="Remacha M.A."/>
            <person name="Revuelta J.L."/>
            <person name="Rieger M."/>
            <person name="Salom D."/>
            <person name="Saluz H.P."/>
            <person name="Saiz J.E."/>
            <person name="Saren A.-M."/>
            <person name="Schaefer M."/>
            <person name="Scharfe M."/>
            <person name="Schmidt E.R."/>
            <person name="Schneider C."/>
            <person name="Scholler P."/>
            <person name="Schwarz S."/>
            <person name="Soler-Mira A."/>
            <person name="Urrestarazu L.A."/>
            <person name="Verhasselt P."/>
            <person name="Vissers S."/>
            <person name="Voet M."/>
            <person name="Volckaert G."/>
            <person name="Wagner G."/>
            <person name="Wambutt R."/>
            <person name="Wedler E."/>
            <person name="Wedler H."/>
            <person name="Woelfl S."/>
            <person name="Harris D.E."/>
            <person name="Bowman S."/>
            <person name="Brown D."/>
            <person name="Churcher C.M."/>
            <person name="Connor R."/>
            <person name="Dedman K."/>
            <person name="Gentles S."/>
            <person name="Hamlin N."/>
            <person name="Hunt S."/>
            <person name="Jones L."/>
            <person name="McDonald S."/>
            <person name="Murphy L.D."/>
            <person name="Niblett D."/>
            <person name="Odell C."/>
            <person name="Oliver K."/>
            <person name="Rajandream M.A."/>
            <person name="Richards C."/>
            <person name="Shore L."/>
            <person name="Walsh S.V."/>
            <person name="Barrell B.G."/>
            <person name="Dietrich F.S."/>
            <person name="Mulligan J.T."/>
            <person name="Allen E."/>
            <person name="Araujo R."/>
            <person name="Aviles E."/>
            <person name="Berno A."/>
            <person name="Carpenter J."/>
            <person name="Chen E."/>
            <person name="Cherry J.M."/>
            <person name="Chung E."/>
            <person name="Duncan M."/>
            <person name="Hunicke-Smith S."/>
            <person name="Hyman R.W."/>
            <person name="Komp C."/>
            <person name="Lashkari D."/>
            <person name="Lew H."/>
            <person name="Lin D."/>
            <person name="Mosedale D."/>
            <person name="Nakahara K."/>
            <person name="Namath A."/>
            <person name="Oefner P."/>
            <person name="Oh C."/>
            <person name="Petel F.X."/>
            <person name="Roberts D."/>
            <person name="Schramm S."/>
            <person name="Schroeder M."/>
            <person name="Shogren T."/>
            <person name="Shroff N."/>
            <person name="Winant A."/>
            <person name="Yelton M.A."/>
            <person name="Botstein D."/>
            <person name="Davis R.W."/>
            <person name="Johnston M."/>
            <person name="Andrews S."/>
            <person name="Brinkman R."/>
            <person name="Cooper J."/>
            <person name="Ding H."/>
            <person name="Du Z."/>
            <person name="Favello A."/>
            <person name="Fulton L."/>
            <person name="Gattung S."/>
            <person name="Greco T."/>
            <person name="Hallsworth K."/>
            <person name="Hawkins J."/>
            <person name="Hillier L.W."/>
            <person name="Jier M."/>
            <person name="Johnson D."/>
            <person name="Johnston L."/>
            <person name="Kirsten J."/>
            <person name="Kucaba T."/>
            <person name="Langston Y."/>
            <person name="Latreille P."/>
            <person name="Le T."/>
            <person name="Mardis E."/>
            <person name="Menezes S."/>
            <person name="Miller N."/>
            <person name="Nhan M."/>
            <person name="Pauley A."/>
            <person name="Peluso D."/>
            <person name="Rifkin L."/>
            <person name="Riles L."/>
            <person name="Taich A."/>
            <person name="Trevaskis E."/>
            <person name="Vignati D."/>
            <person name="Wilcox L."/>
            <person name="Wohldman P."/>
            <person name="Vaudin M."/>
            <person name="Wilson R."/>
            <person name="Waterston R."/>
            <person name="Albermann K."/>
            <person name="Hani J."/>
            <person name="Heumann K."/>
            <person name="Kleine K."/>
            <person name="Mewes H.-W."/>
            <person name="Zollner A."/>
            <person name="Zaccaria P."/>
        </authorList>
    </citation>
    <scope>NUCLEOTIDE SEQUENCE [LARGE SCALE GENOMIC DNA]</scope>
    <source>
        <strain>ATCC 204508 / S288c</strain>
    </source>
</reference>
<reference key="5">
    <citation type="journal article" date="2014" name="G3 (Bethesda)">
        <title>The reference genome sequence of Saccharomyces cerevisiae: Then and now.</title>
        <authorList>
            <person name="Engel S.R."/>
            <person name="Dietrich F.S."/>
            <person name="Fisk D.G."/>
            <person name="Binkley G."/>
            <person name="Balakrishnan R."/>
            <person name="Costanzo M.C."/>
            <person name="Dwight S.S."/>
            <person name="Hitz B.C."/>
            <person name="Karra K."/>
            <person name="Nash R.S."/>
            <person name="Weng S."/>
            <person name="Wong E.D."/>
            <person name="Lloyd P."/>
            <person name="Skrzypek M.S."/>
            <person name="Miyasato S.R."/>
            <person name="Simison M."/>
            <person name="Cherry J.M."/>
        </authorList>
    </citation>
    <scope>GENOME REANNOTATION</scope>
    <source>
        <strain>ATCC 204508 / S288c</strain>
    </source>
</reference>
<reference key="6">
    <citation type="journal article" date="2002" name="J. Biol. Chem.">
        <title>Posttranscriptional regulation of the RAD5 DNA repair gene by the Dun1 kinase and the Pan2-Pan3 poly(A)-nuclease complex contributes to survival of replication blocks.</title>
        <authorList>
            <person name="Hammet A."/>
            <person name="Pike B.L."/>
            <person name="Heierhorst J."/>
        </authorList>
    </citation>
    <scope>FUNCTION</scope>
    <scope>INTERACTION WITH PAN3</scope>
</reference>
<reference key="7">
    <citation type="journal article" date="2002" name="Proc. Natl. Acad. Sci. U.S.A.">
        <title>The Dun1 checkpoint kinase phosphorylates and regulates the ribonucleotide reductase inhibitor Sml1.</title>
        <authorList>
            <person name="Zhao X."/>
            <person name="Rothstein R."/>
        </authorList>
    </citation>
    <scope>FUNCTION IN PHOSPHORYLATION OF SML1</scope>
</reference>
<reference key="8">
    <citation type="journal article" date="2003" name="Nature">
        <title>Global analysis of protein expression in yeast.</title>
        <authorList>
            <person name="Ghaemmaghami S."/>
            <person name="Huh W.-K."/>
            <person name="Bower K."/>
            <person name="Howson R.W."/>
            <person name="Belle A."/>
            <person name="Dephoure N."/>
            <person name="O'Shea E.K."/>
            <person name="Weissman J.S."/>
        </authorList>
    </citation>
    <scope>LEVEL OF PROTEIN EXPRESSION [LARGE SCALE ANALYSIS]</scope>
</reference>
<reference key="9">
    <citation type="journal article" date="2007" name="Proc. Natl. Acad. Sci. U.S.A.">
        <title>Analysis of phosphorylation sites on proteins from Saccharomyces cerevisiae by electron transfer dissociation (ETD) mass spectrometry.</title>
        <authorList>
            <person name="Chi A."/>
            <person name="Huttenhower C."/>
            <person name="Geer L.Y."/>
            <person name="Coon J.J."/>
            <person name="Syka J.E.P."/>
            <person name="Bai D.L."/>
            <person name="Shabanowitz J."/>
            <person name="Burke D.J."/>
            <person name="Troyanskaya O.G."/>
            <person name="Hunt D.F."/>
        </authorList>
    </citation>
    <scope>IDENTIFICATION BY MASS SPECTROMETRY [LARGE SCALE ANALYSIS]</scope>
</reference>
<reference key="10">
    <citation type="journal article" date="2008" name="Mol. Cell. Proteomics">
        <title>A multidimensional chromatography technology for in-depth phosphoproteome analysis.</title>
        <authorList>
            <person name="Albuquerque C.P."/>
            <person name="Smolka M.B."/>
            <person name="Payne S.H."/>
            <person name="Bafna V."/>
            <person name="Eng J."/>
            <person name="Zhou H."/>
        </authorList>
    </citation>
    <scope>PHOSPHORYLATION [LARGE SCALE ANALYSIS] AT SER-10; SER-139 AND THR-380</scope>
    <scope>IDENTIFICATION BY MASS SPECTROMETRY [LARGE SCALE ANALYSIS]</scope>
</reference>
<name>DUN1_YEAST</name>
<gene>
    <name type="primary">DUN1</name>
    <name type="ordered locus">YDL101C</name>
    <name type="ORF">D2370</name>
</gene>
<protein>
    <recommendedName>
        <fullName>DNA damage response protein kinase DUN1</fullName>
        <ecNumber>2.7.11.1</ecNumber>
    </recommendedName>
</protein>
<dbReference type="EC" id="2.7.11.1"/>
<dbReference type="EMBL" id="L25548">
    <property type="protein sequence ID" value="AAA16324.1"/>
    <property type="molecule type" value="Unassigned_DNA"/>
</dbReference>
<dbReference type="EMBL" id="X95644">
    <property type="protein sequence ID" value="CAA64912.1"/>
    <property type="molecule type" value="Genomic_DNA"/>
</dbReference>
<dbReference type="EMBL" id="Z74149">
    <property type="protein sequence ID" value="CAA98668.1"/>
    <property type="molecule type" value="Genomic_DNA"/>
</dbReference>
<dbReference type="EMBL" id="BK006938">
    <property type="protein sequence ID" value="DAA11759.1"/>
    <property type="molecule type" value="Genomic_DNA"/>
</dbReference>
<dbReference type="PIR" id="S43941">
    <property type="entry name" value="S43941"/>
</dbReference>
<dbReference type="RefSeq" id="NP_010182.1">
    <property type="nucleotide sequence ID" value="NM_001180160.1"/>
</dbReference>
<dbReference type="PDB" id="2JQJ">
    <property type="method" value="NMR"/>
    <property type="chains" value="A=19-159"/>
</dbReference>
<dbReference type="PDB" id="2JQL">
    <property type="method" value="NMR"/>
    <property type="chains" value="A=19-159"/>
</dbReference>
<dbReference type="PDBsum" id="2JQJ"/>
<dbReference type="PDBsum" id="2JQL"/>
<dbReference type="SMR" id="P39009"/>
<dbReference type="BioGRID" id="31961">
    <property type="interactions" value="501"/>
</dbReference>
<dbReference type="DIP" id="DIP-1772N"/>
<dbReference type="FunCoup" id="P39009">
    <property type="interactions" value="695"/>
</dbReference>
<dbReference type="IntAct" id="P39009">
    <property type="interactions" value="57"/>
</dbReference>
<dbReference type="MINT" id="P39009"/>
<dbReference type="STRING" id="4932.YDL101C"/>
<dbReference type="iPTMnet" id="P39009"/>
<dbReference type="PaxDb" id="4932-YDL101C"/>
<dbReference type="PeptideAtlas" id="P39009"/>
<dbReference type="EnsemblFungi" id="YDL101C_mRNA">
    <property type="protein sequence ID" value="YDL101C"/>
    <property type="gene ID" value="YDL101C"/>
</dbReference>
<dbReference type="GeneID" id="851457"/>
<dbReference type="KEGG" id="sce:YDL101C"/>
<dbReference type="AGR" id="SGD:S000002259"/>
<dbReference type="SGD" id="S000002259">
    <property type="gene designation" value="DUN1"/>
</dbReference>
<dbReference type="VEuPathDB" id="FungiDB:YDL101C"/>
<dbReference type="eggNOG" id="KOG0615">
    <property type="taxonomic scope" value="Eukaryota"/>
</dbReference>
<dbReference type="GeneTree" id="ENSGT00800000124190"/>
<dbReference type="HOGENOM" id="CLU_000288_63_47_1"/>
<dbReference type="InParanoid" id="P39009"/>
<dbReference type="OMA" id="MLCAVQY"/>
<dbReference type="OrthoDB" id="407410at2759"/>
<dbReference type="BioCyc" id="YEAST:G3O-29504-MONOMER"/>
<dbReference type="BRENDA" id="2.7.11.1">
    <property type="organism ID" value="984"/>
</dbReference>
<dbReference type="Reactome" id="R-SCE-5693565">
    <property type="pathway name" value="Recruitment and ATM-mediated phosphorylation of repair and signaling proteins at DNA double strand breaks"/>
</dbReference>
<dbReference type="Reactome" id="R-SCE-69473">
    <property type="pathway name" value="G2/M DNA damage checkpoint"/>
</dbReference>
<dbReference type="Reactome" id="R-SCE-69601">
    <property type="pathway name" value="Ubiquitin Mediated Degradation of Phosphorylated Cdc25A"/>
</dbReference>
<dbReference type="Reactome" id="R-SCE-75035">
    <property type="pathway name" value="Chk1/Chk2(Cds1) mediated inactivation of Cyclin B:Cdk1 complex"/>
</dbReference>
<dbReference type="BioGRID-ORCS" id="851457">
    <property type="hits" value="1 hit in 13 CRISPR screens"/>
</dbReference>
<dbReference type="CD-CODE" id="E03F929F">
    <property type="entry name" value="Stress granule"/>
</dbReference>
<dbReference type="EvolutionaryTrace" id="P39009"/>
<dbReference type="PRO" id="PR:P39009"/>
<dbReference type="Proteomes" id="UP000002311">
    <property type="component" value="Chromosome IV"/>
</dbReference>
<dbReference type="RNAct" id="P39009">
    <property type="molecule type" value="protein"/>
</dbReference>
<dbReference type="GO" id="GO:0005634">
    <property type="term" value="C:nucleus"/>
    <property type="evidence" value="ECO:0007005"/>
    <property type="project" value="SGD"/>
</dbReference>
<dbReference type="GO" id="GO:0005524">
    <property type="term" value="F:ATP binding"/>
    <property type="evidence" value="ECO:0007669"/>
    <property type="project" value="UniProtKB-KW"/>
</dbReference>
<dbReference type="GO" id="GO:0004672">
    <property type="term" value="F:protein kinase activity"/>
    <property type="evidence" value="ECO:0000314"/>
    <property type="project" value="SGD"/>
</dbReference>
<dbReference type="GO" id="GO:0106310">
    <property type="term" value="F:protein serine kinase activity"/>
    <property type="evidence" value="ECO:0007669"/>
    <property type="project" value="RHEA"/>
</dbReference>
<dbReference type="GO" id="GO:0004674">
    <property type="term" value="F:protein serine/threonine kinase activity"/>
    <property type="evidence" value="ECO:0000314"/>
    <property type="project" value="SGD"/>
</dbReference>
<dbReference type="GO" id="GO:0000077">
    <property type="term" value="P:DNA damage checkpoint signaling"/>
    <property type="evidence" value="ECO:0000315"/>
    <property type="project" value="SGD"/>
</dbReference>
<dbReference type="GO" id="GO:0006303">
    <property type="term" value="P:double-strand break repair via nonhomologous end joining"/>
    <property type="evidence" value="ECO:0000315"/>
    <property type="project" value="SGD"/>
</dbReference>
<dbReference type="GO" id="GO:0044773">
    <property type="term" value="P:mitotic DNA damage checkpoint signaling"/>
    <property type="evidence" value="ECO:0000318"/>
    <property type="project" value="GO_Central"/>
</dbReference>
<dbReference type="GO" id="GO:0031297">
    <property type="term" value="P:replication fork processing"/>
    <property type="evidence" value="ECO:0000316"/>
    <property type="project" value="SGD"/>
</dbReference>
<dbReference type="CDD" id="cd22683">
    <property type="entry name" value="FHA_DUN1-like"/>
    <property type="match status" value="1"/>
</dbReference>
<dbReference type="CDD" id="cd05117">
    <property type="entry name" value="STKc_CAMK"/>
    <property type="match status" value="1"/>
</dbReference>
<dbReference type="FunFam" id="1.10.510.10:FF:000732">
    <property type="entry name" value="Protein serine-threonine kinase"/>
    <property type="match status" value="1"/>
</dbReference>
<dbReference type="FunFam" id="2.60.200.20:FF:000074">
    <property type="entry name" value="Protein serine-threonine kinase"/>
    <property type="match status" value="1"/>
</dbReference>
<dbReference type="Gene3D" id="2.60.200.20">
    <property type="match status" value="1"/>
</dbReference>
<dbReference type="Gene3D" id="1.10.510.10">
    <property type="entry name" value="Transferase(Phosphotransferase) domain 1"/>
    <property type="match status" value="1"/>
</dbReference>
<dbReference type="IDEAL" id="IID50174"/>
<dbReference type="InterPro" id="IPR000253">
    <property type="entry name" value="FHA_dom"/>
</dbReference>
<dbReference type="InterPro" id="IPR011009">
    <property type="entry name" value="Kinase-like_dom_sf"/>
</dbReference>
<dbReference type="InterPro" id="IPR000719">
    <property type="entry name" value="Prot_kinase_dom"/>
</dbReference>
<dbReference type="InterPro" id="IPR017441">
    <property type="entry name" value="Protein_kinase_ATP_BS"/>
</dbReference>
<dbReference type="InterPro" id="IPR008271">
    <property type="entry name" value="Ser/Thr_kinase_AS"/>
</dbReference>
<dbReference type="InterPro" id="IPR008984">
    <property type="entry name" value="SMAD_FHA_dom_sf"/>
</dbReference>
<dbReference type="PANTHER" id="PTHR24347">
    <property type="entry name" value="SERINE/THREONINE-PROTEIN KINASE"/>
    <property type="match status" value="1"/>
</dbReference>
<dbReference type="Pfam" id="PF00498">
    <property type="entry name" value="FHA"/>
    <property type="match status" value="1"/>
</dbReference>
<dbReference type="Pfam" id="PF00069">
    <property type="entry name" value="Pkinase"/>
    <property type="match status" value="1"/>
</dbReference>
<dbReference type="SMART" id="SM00240">
    <property type="entry name" value="FHA"/>
    <property type="match status" value="1"/>
</dbReference>
<dbReference type="SMART" id="SM00220">
    <property type="entry name" value="S_TKc"/>
    <property type="match status" value="1"/>
</dbReference>
<dbReference type="SUPFAM" id="SSF56112">
    <property type="entry name" value="Protein kinase-like (PK-like)"/>
    <property type="match status" value="1"/>
</dbReference>
<dbReference type="SUPFAM" id="SSF49879">
    <property type="entry name" value="SMAD/FHA domain"/>
    <property type="match status" value="1"/>
</dbReference>
<dbReference type="PROSITE" id="PS50006">
    <property type="entry name" value="FHA_DOMAIN"/>
    <property type="match status" value="1"/>
</dbReference>
<dbReference type="PROSITE" id="PS00107">
    <property type="entry name" value="PROTEIN_KINASE_ATP"/>
    <property type="match status" value="1"/>
</dbReference>
<dbReference type="PROSITE" id="PS50011">
    <property type="entry name" value="PROTEIN_KINASE_DOM"/>
    <property type="match status" value="1"/>
</dbReference>
<dbReference type="PROSITE" id="PS00108">
    <property type="entry name" value="PROTEIN_KINASE_ST"/>
    <property type="match status" value="1"/>
</dbReference>
<feature type="chain" id="PRO_0000085930" description="DNA damage response protein kinase DUN1">
    <location>
        <begin position="1"/>
        <end position="513"/>
    </location>
</feature>
<feature type="domain" description="FHA" evidence="1">
    <location>
        <begin position="56"/>
        <end position="112"/>
    </location>
</feature>
<feature type="domain" description="Protein kinase" evidence="2">
    <location>
        <begin position="200"/>
        <end position="480"/>
    </location>
</feature>
<feature type="region of interest" description="Disordered" evidence="3">
    <location>
        <begin position="1"/>
        <end position="29"/>
    </location>
</feature>
<feature type="compositionally biased region" description="Basic and acidic residues" evidence="3">
    <location>
        <begin position="1"/>
        <end position="12"/>
    </location>
</feature>
<feature type="active site" description="Proton acceptor">
    <location>
        <position position="328"/>
    </location>
</feature>
<feature type="binding site" evidence="2">
    <location>
        <begin position="206"/>
        <end position="214"/>
    </location>
    <ligand>
        <name>ATP</name>
        <dbReference type="ChEBI" id="CHEBI:30616"/>
    </ligand>
</feature>
<feature type="binding site">
    <location>
        <position position="229"/>
    </location>
    <ligand>
        <name>ATP</name>
        <dbReference type="ChEBI" id="CHEBI:30616"/>
    </ligand>
</feature>
<feature type="modified residue" description="Phosphoserine" evidence="9">
    <location>
        <position position="10"/>
    </location>
</feature>
<feature type="modified residue" description="Phosphoserine" evidence="9">
    <location>
        <position position="139"/>
    </location>
</feature>
<feature type="modified residue" description="Phosphothreonine" evidence="9">
    <location>
        <position position="380"/>
    </location>
</feature>
<feature type="mutagenesis site" description="Loss of kinase activity." evidence="7">
    <original>K</original>
    <variation>R</variation>
    <location>
        <position position="229"/>
    </location>
</feature>
<feature type="mutagenesis site" description="Loss of kinase activity." evidence="7">
    <original>D</original>
    <variation>A</variation>
    <location>
        <position position="328"/>
    </location>
</feature>
<feature type="strand" evidence="10">
    <location>
        <begin position="28"/>
        <end position="30"/>
    </location>
</feature>
<feature type="strand" evidence="10">
    <location>
        <begin position="33"/>
        <end position="41"/>
    </location>
</feature>
<feature type="strand" evidence="10">
    <location>
        <begin position="44"/>
        <end position="51"/>
    </location>
</feature>
<feature type="strand" evidence="10">
    <location>
        <begin position="56"/>
        <end position="61"/>
    </location>
</feature>
<feature type="strand" evidence="10">
    <location>
        <begin position="64"/>
        <end position="67"/>
    </location>
</feature>
<feature type="strand" evidence="10">
    <location>
        <begin position="77"/>
        <end position="87"/>
    </location>
</feature>
<feature type="strand" evidence="10">
    <location>
        <begin position="90"/>
        <end position="99"/>
    </location>
</feature>
<feature type="strand" evidence="11">
    <location>
        <begin position="101"/>
        <end position="103"/>
    </location>
</feature>
<feature type="strand" evidence="10">
    <location>
        <begin position="105"/>
        <end position="107"/>
    </location>
</feature>
<feature type="strand" evidence="10">
    <location>
        <begin position="117"/>
        <end position="119"/>
    </location>
</feature>
<feature type="strand" evidence="10">
    <location>
        <begin position="121"/>
        <end position="127"/>
    </location>
</feature>
<feature type="turn" evidence="10">
    <location>
        <begin position="128"/>
        <end position="130"/>
    </location>
</feature>
<feature type="strand" evidence="10">
    <location>
        <begin position="131"/>
        <end position="137"/>
    </location>
</feature>
<feature type="strand" evidence="11">
    <location>
        <begin position="145"/>
        <end position="147"/>
    </location>
</feature>
<feature type="strand" evidence="10">
    <location>
        <begin position="154"/>
        <end position="157"/>
    </location>
</feature>
<evidence type="ECO:0000255" key="1">
    <source>
        <dbReference type="PROSITE-ProRule" id="PRU00086"/>
    </source>
</evidence>
<evidence type="ECO:0000255" key="2">
    <source>
        <dbReference type="PROSITE-ProRule" id="PRU00159"/>
    </source>
</evidence>
<evidence type="ECO:0000256" key="3">
    <source>
        <dbReference type="SAM" id="MobiDB-lite"/>
    </source>
</evidence>
<evidence type="ECO:0000269" key="4">
    <source>
    </source>
</evidence>
<evidence type="ECO:0000269" key="5">
    <source>
    </source>
</evidence>
<evidence type="ECO:0000269" key="6">
    <source>
    </source>
</evidence>
<evidence type="ECO:0000269" key="7">
    <source>
    </source>
</evidence>
<evidence type="ECO:0000305" key="8"/>
<evidence type="ECO:0007744" key="9">
    <source>
    </source>
</evidence>
<evidence type="ECO:0007829" key="10">
    <source>
        <dbReference type="PDB" id="2JQJ"/>
    </source>
</evidence>
<evidence type="ECO:0007829" key="11">
    <source>
        <dbReference type="PDB" id="2JQL"/>
    </source>
</evidence>
<accession>P39009</accession>
<accession>D6VRP9</accession>
<organism>
    <name type="scientific">Saccharomyces cerevisiae (strain ATCC 204508 / S288c)</name>
    <name type="common">Baker's yeast</name>
    <dbReference type="NCBI Taxonomy" id="559292"/>
    <lineage>
        <taxon>Eukaryota</taxon>
        <taxon>Fungi</taxon>
        <taxon>Dikarya</taxon>
        <taxon>Ascomycota</taxon>
        <taxon>Saccharomycotina</taxon>
        <taxon>Saccharomycetes</taxon>
        <taxon>Saccharomycetales</taxon>
        <taxon>Saccharomycetaceae</taxon>
        <taxon>Saccharomyces</taxon>
    </lineage>
</organism>
<keyword id="KW-0002">3D-structure</keyword>
<keyword id="KW-0067">ATP-binding</keyword>
<keyword id="KW-0227">DNA damage</keyword>
<keyword id="KW-0418">Kinase</keyword>
<keyword id="KW-0547">Nucleotide-binding</keyword>
<keyword id="KW-0539">Nucleus</keyword>
<keyword id="KW-0597">Phosphoprotein</keyword>
<keyword id="KW-1185">Reference proteome</keyword>
<keyword id="KW-0723">Serine/threonine-protein kinase</keyword>
<keyword id="KW-0808">Transferase</keyword>